<name>UAP1_CANAX</name>
<dbReference type="EC" id="2.7.7.23"/>
<dbReference type="EMBL" id="AB011003">
    <property type="protein sequence ID" value="BAA32334.1"/>
    <property type="molecule type" value="Genomic_DNA"/>
</dbReference>
<dbReference type="PDB" id="2YQC">
    <property type="method" value="X-ray"/>
    <property type="resolution" value="1.90 A"/>
    <property type="chains" value="A=1-486"/>
</dbReference>
<dbReference type="PDB" id="2YQH">
    <property type="method" value="X-ray"/>
    <property type="resolution" value="2.30 A"/>
    <property type="chains" value="A/B=1-486"/>
</dbReference>
<dbReference type="PDB" id="2YQJ">
    <property type="method" value="X-ray"/>
    <property type="resolution" value="2.31 A"/>
    <property type="chains" value="A/B=1-486"/>
</dbReference>
<dbReference type="PDB" id="2YQS">
    <property type="method" value="X-ray"/>
    <property type="resolution" value="2.30 A"/>
    <property type="chains" value="A=1-486"/>
</dbReference>
<dbReference type="PDBsum" id="2YQC"/>
<dbReference type="PDBsum" id="2YQH"/>
<dbReference type="PDBsum" id="2YQJ"/>
<dbReference type="PDBsum" id="2YQS"/>
<dbReference type="SMR" id="O74933"/>
<dbReference type="VEuPathDB" id="FungiDB:C5_02530W_A"/>
<dbReference type="VEuPathDB" id="FungiDB:CAWG_04635"/>
<dbReference type="BRENDA" id="2.7.7.23">
    <property type="organism ID" value="1096"/>
</dbReference>
<dbReference type="UniPathway" id="UPA00113">
    <property type="reaction ID" value="UER00533"/>
</dbReference>
<dbReference type="EvolutionaryTrace" id="O74933"/>
<dbReference type="GO" id="GO:0005737">
    <property type="term" value="C:cytoplasm"/>
    <property type="evidence" value="ECO:0007669"/>
    <property type="project" value="UniProtKB-SubCell"/>
</dbReference>
<dbReference type="GO" id="GO:0003977">
    <property type="term" value="F:UDP-N-acetylglucosamine diphosphorylase activity"/>
    <property type="evidence" value="ECO:0007669"/>
    <property type="project" value="UniProtKB-EC"/>
</dbReference>
<dbReference type="GO" id="GO:0006048">
    <property type="term" value="P:UDP-N-acetylglucosamine biosynthetic process"/>
    <property type="evidence" value="ECO:0007669"/>
    <property type="project" value="UniProtKB-UniPathway"/>
</dbReference>
<dbReference type="CDD" id="cd04193">
    <property type="entry name" value="UDPGlcNAc_PPase"/>
    <property type="match status" value="1"/>
</dbReference>
<dbReference type="FunFam" id="3.90.550.10:FF:000072">
    <property type="entry name" value="UDP-N-acetylglucosamine diphosphorylase 2"/>
    <property type="match status" value="1"/>
</dbReference>
<dbReference type="Gene3D" id="3.90.550.10">
    <property type="entry name" value="Spore Coat Polysaccharide Biosynthesis Protein SpsA, Chain A"/>
    <property type="match status" value="1"/>
</dbReference>
<dbReference type="InterPro" id="IPR029044">
    <property type="entry name" value="Nucleotide-diphossugar_trans"/>
</dbReference>
<dbReference type="InterPro" id="IPR039741">
    <property type="entry name" value="UDP-sugar_pyrophosphorylase"/>
</dbReference>
<dbReference type="InterPro" id="IPR002618">
    <property type="entry name" value="UDPGP_fam"/>
</dbReference>
<dbReference type="PANTHER" id="PTHR11952:SF2">
    <property type="entry name" value="LD24639P"/>
    <property type="match status" value="1"/>
</dbReference>
<dbReference type="PANTHER" id="PTHR11952">
    <property type="entry name" value="UDP- GLUCOSE PYROPHOSPHORYLASE"/>
    <property type="match status" value="1"/>
</dbReference>
<dbReference type="Pfam" id="PF01704">
    <property type="entry name" value="UDPGP"/>
    <property type="match status" value="1"/>
</dbReference>
<dbReference type="SUPFAM" id="SSF53448">
    <property type="entry name" value="Nucleotide-diphospho-sugar transferases"/>
    <property type="match status" value="1"/>
</dbReference>
<comment type="catalytic activity">
    <reaction>
        <text>N-acetyl-alpha-D-glucosamine 1-phosphate + UTP + H(+) = UDP-N-acetyl-alpha-D-glucosamine + diphosphate</text>
        <dbReference type="Rhea" id="RHEA:13509"/>
        <dbReference type="ChEBI" id="CHEBI:15378"/>
        <dbReference type="ChEBI" id="CHEBI:33019"/>
        <dbReference type="ChEBI" id="CHEBI:46398"/>
        <dbReference type="ChEBI" id="CHEBI:57705"/>
        <dbReference type="ChEBI" id="CHEBI:57776"/>
        <dbReference type="EC" id="2.7.7.23"/>
    </reaction>
</comment>
<comment type="pathway">
    <text>Nucleotide-sugar biosynthesis; UDP-N-acetyl-alpha-D-glucosamine biosynthesis; UDP-N-acetyl-alpha-D-glucosamine from N-acetyl-alpha-D-glucosamine 1-phosphate: step 1/1.</text>
</comment>
<comment type="subcellular location">
    <subcellularLocation>
        <location evidence="1">Cytoplasm</location>
    </subcellularLocation>
</comment>
<comment type="similarity">
    <text evidence="3">Belongs to the UDPGP type 1 family.</text>
</comment>
<protein>
    <recommendedName>
        <fullName>UDP-N-acetylglucosamine pyrophosphorylase</fullName>
        <ecNumber>2.7.7.23</ecNumber>
    </recommendedName>
</protein>
<reference key="1">
    <citation type="journal article" date="1998" name="J. Biol. Chem.">
        <title>The eukaryotic UDP-N-acetylglucosamine pyrophosphorylases: gene cloning, protein expression, and catalytic mechanism.</title>
        <authorList>
            <person name="Mio T."/>
            <person name="Yabe T."/>
            <person name="Arisawa M."/>
            <person name="Yamada-Okabe H."/>
        </authorList>
    </citation>
    <scope>NUCLEOTIDE SEQUENCE [GENOMIC DNA]</scope>
</reference>
<feature type="chain" id="PRO_0000185771" description="UDP-N-acetylglucosamine pyrophosphorylase">
    <location>
        <begin position="1"/>
        <end position="486"/>
    </location>
</feature>
<feature type="short sequence motif" description="Substrate binding" evidence="1">
    <location>
        <begin position="109"/>
        <end position="112"/>
    </location>
</feature>
<feature type="short sequence motif" description="Substrate binding" evidence="1">
    <location>
        <begin position="309"/>
        <end position="310"/>
    </location>
</feature>
<feature type="binding site" evidence="2">
    <location>
        <begin position="109"/>
        <end position="112"/>
    </location>
    <ligand>
        <name>UTP</name>
        <dbReference type="ChEBI" id="CHEBI:46398"/>
    </ligand>
</feature>
<feature type="binding site" evidence="2">
    <location>
        <position position="123"/>
    </location>
    <ligand>
        <name>UTP</name>
        <dbReference type="ChEBI" id="CHEBI:46398"/>
    </ligand>
</feature>
<feature type="binding site" evidence="2">
    <location>
        <position position="199"/>
    </location>
    <ligand>
        <name>UTP</name>
        <dbReference type="ChEBI" id="CHEBI:46398"/>
    </ligand>
</feature>
<feature type="binding site" evidence="2">
    <location>
        <position position="226"/>
    </location>
    <ligand>
        <name>UTP</name>
        <dbReference type="ChEBI" id="CHEBI:46398"/>
    </ligand>
</feature>
<feature type="binding site" evidence="1">
    <location>
        <position position="227"/>
    </location>
    <ligand>
        <name>substrate</name>
    </ligand>
</feature>
<feature type="binding site" evidence="2">
    <location>
        <position position="257"/>
    </location>
    <ligand>
        <name>UTP</name>
        <dbReference type="ChEBI" id="CHEBI:46398"/>
    </ligand>
</feature>
<feature type="binding site" evidence="2">
    <location>
        <position position="389"/>
    </location>
    <ligand>
        <name>UTP</name>
        <dbReference type="ChEBI" id="CHEBI:46398"/>
    </ligand>
</feature>
<feature type="binding site" evidence="1">
    <location>
        <position position="421"/>
    </location>
    <ligand>
        <name>substrate</name>
    </ligand>
</feature>
<feature type="helix" evidence="4">
    <location>
        <begin position="6"/>
        <end position="15"/>
    </location>
</feature>
<feature type="helix" evidence="4">
    <location>
        <begin position="19"/>
        <end position="22"/>
    </location>
</feature>
<feature type="helix" evidence="4">
    <location>
        <begin position="25"/>
        <end position="27"/>
    </location>
</feature>
<feature type="helix" evidence="4">
    <location>
        <begin position="30"/>
        <end position="41"/>
    </location>
</feature>
<feature type="strand" evidence="4">
    <location>
        <begin position="43"/>
        <end position="45"/>
    </location>
</feature>
<feature type="helix" evidence="4">
    <location>
        <begin position="46"/>
        <end position="59"/>
    </location>
</feature>
<feature type="helix" evidence="4">
    <location>
        <begin position="74"/>
        <end position="76"/>
    </location>
</feature>
<feature type="strand" evidence="4">
    <location>
        <begin position="77"/>
        <end position="79"/>
    </location>
</feature>
<feature type="turn" evidence="4">
    <location>
        <begin position="80"/>
        <end position="82"/>
    </location>
</feature>
<feature type="helix" evidence="4">
    <location>
        <begin position="85"/>
        <end position="100"/>
    </location>
</feature>
<feature type="strand" evidence="4">
    <location>
        <begin position="104"/>
        <end position="113"/>
    </location>
</feature>
<feature type="helix" evidence="4">
    <location>
        <begin position="115"/>
        <end position="117"/>
    </location>
</feature>
<feature type="strand" evidence="4">
    <location>
        <begin position="120"/>
        <end position="122"/>
    </location>
</feature>
<feature type="helix" evidence="4">
    <location>
        <begin position="123"/>
        <end position="125"/>
    </location>
</feature>
<feature type="helix" evidence="4">
    <location>
        <begin position="136"/>
        <end position="155"/>
    </location>
</feature>
<feature type="strand" evidence="4">
    <location>
        <begin position="164"/>
        <end position="169"/>
    </location>
</feature>
<feature type="helix" evidence="4">
    <location>
        <begin position="171"/>
        <end position="173"/>
    </location>
</feature>
<feature type="helix" evidence="4">
    <location>
        <begin position="174"/>
        <end position="183"/>
    </location>
</feature>
<feature type="helix" evidence="4">
    <location>
        <begin position="185"/>
        <end position="188"/>
    </location>
</feature>
<feature type="helix" evidence="4">
    <location>
        <begin position="191"/>
        <end position="193"/>
    </location>
</feature>
<feature type="strand" evidence="4">
    <location>
        <begin position="194"/>
        <end position="198"/>
    </location>
</feature>
<feature type="strand" evidence="4">
    <location>
        <begin position="201"/>
        <end position="203"/>
    </location>
</feature>
<feature type="strand" evidence="4">
    <location>
        <begin position="209"/>
        <end position="212"/>
    </location>
</feature>
<feature type="strand" evidence="4">
    <location>
        <begin position="214"/>
        <end position="216"/>
    </location>
</feature>
<feature type="strand" evidence="4">
    <location>
        <begin position="222"/>
        <end position="224"/>
    </location>
</feature>
<feature type="helix" evidence="4">
    <location>
        <begin position="227"/>
        <end position="229"/>
    </location>
</feature>
<feature type="helix" evidence="4">
    <location>
        <begin position="230"/>
        <end position="236"/>
    </location>
</feature>
<feature type="helix" evidence="4">
    <location>
        <begin position="239"/>
        <end position="246"/>
    </location>
</feature>
<feature type="strand" evidence="4">
    <location>
        <begin position="250"/>
        <end position="255"/>
    </location>
</feature>
<feature type="helix" evidence="4">
    <location>
        <begin position="266"/>
        <end position="275"/>
    </location>
</feature>
<feature type="strand" evidence="4">
    <location>
        <begin position="278"/>
        <end position="285"/>
    </location>
</feature>
<feature type="strand" evidence="4">
    <location>
        <begin position="295"/>
        <end position="299"/>
    </location>
</feature>
<feature type="turn" evidence="4">
    <location>
        <begin position="300"/>
        <end position="303"/>
    </location>
</feature>
<feature type="strand" evidence="4">
    <location>
        <begin position="304"/>
        <end position="308"/>
    </location>
</feature>
<feature type="helix" evidence="4">
    <location>
        <begin position="310"/>
        <end position="312"/>
    </location>
</feature>
<feature type="helix" evidence="4">
    <location>
        <begin position="315"/>
        <end position="319"/>
    </location>
</feature>
<feature type="strand" evidence="4">
    <location>
        <begin position="325"/>
        <end position="331"/>
    </location>
</feature>
<feature type="strand" evidence="4">
    <location>
        <begin position="333"/>
        <end position="342"/>
    </location>
</feature>
<feature type="helix" evidence="4">
    <location>
        <begin position="343"/>
        <end position="353"/>
    </location>
</feature>
<feature type="turn" evidence="4">
    <location>
        <begin position="357"/>
        <end position="359"/>
    </location>
</feature>
<feature type="strand" evidence="4">
    <location>
        <begin position="363"/>
        <end position="367"/>
    </location>
</feature>
<feature type="turn" evidence="4">
    <location>
        <begin position="374"/>
        <end position="376"/>
    </location>
</feature>
<feature type="strand" evidence="4">
    <location>
        <begin position="387"/>
        <end position="391"/>
    </location>
</feature>
<feature type="helix" evidence="4">
    <location>
        <begin position="394"/>
        <end position="400"/>
    </location>
</feature>
<feature type="helix" evidence="4">
    <location>
        <begin position="403"/>
        <end position="405"/>
    </location>
</feature>
<feature type="strand" evidence="4">
    <location>
        <begin position="406"/>
        <end position="411"/>
    </location>
</feature>
<feature type="helix" evidence="4">
    <location>
        <begin position="413"/>
        <end position="416"/>
    </location>
</feature>
<feature type="strand" evidence="4">
    <location>
        <begin position="426"/>
        <end position="430"/>
    </location>
</feature>
<feature type="helix" evidence="4">
    <location>
        <begin position="431"/>
        <end position="448"/>
    </location>
</feature>
<feature type="helix" evidence="5">
    <location>
        <begin position="454"/>
        <end position="456"/>
    </location>
</feature>
<feature type="turn" evidence="4">
    <location>
        <begin position="463"/>
        <end position="465"/>
    </location>
</feature>
<feature type="strand" evidence="4">
    <location>
        <begin position="467"/>
        <end position="469"/>
    </location>
</feature>
<feature type="helix" evidence="4">
    <location>
        <begin position="473"/>
        <end position="475"/>
    </location>
</feature>
<proteinExistence type="evidence at protein level"/>
<accession>O74933</accession>
<organism>
    <name type="scientific">Candida albicans</name>
    <name type="common">Yeast</name>
    <dbReference type="NCBI Taxonomy" id="5476"/>
    <lineage>
        <taxon>Eukaryota</taxon>
        <taxon>Fungi</taxon>
        <taxon>Dikarya</taxon>
        <taxon>Ascomycota</taxon>
        <taxon>Saccharomycotina</taxon>
        <taxon>Pichiomycetes</taxon>
        <taxon>Debaryomycetaceae</taxon>
        <taxon>Candida/Lodderomyces clade</taxon>
        <taxon>Candida</taxon>
    </lineage>
</organism>
<keyword id="KW-0002">3D-structure</keyword>
<keyword id="KW-0963">Cytoplasm</keyword>
<keyword id="KW-0548">Nucleotidyltransferase</keyword>
<keyword id="KW-0808">Transferase</keyword>
<sequence length="486" mass="54644">MTVKSQQQIIDSFKQANQDQLFQYYDSLTIDQQQEFIDQLSTIEEPAKLISTVEQAIQFSQTNSTSRNFTQLPNEQTASTLDLSKDILQNWTELGLKAIGNGEVAVLLMAGGQGTRLGSSAPKGCFNIELPSQKSLFQIQAEKILKIEQLAQQYLKSTKKPIINWYIMTSGPTRNATESFFIENNYFGLNSHQVIFFNQGTLPCFNLQGNKILLESKNSICQSPDGNGGLYKALKDNGILDDLNSKGIKHIHMYCVDNCLVKVADPIFIGFAIAKKFDLATKVVRKRDANESVGLIVLDQDNQKPCVIEYSEISQELANKKDPQDSSKLFLRAANIVNHYYSVEFLNKMIPKWISSQKYLPFHIAKKKIPSLNLENGEFYKPTEPNGIKLEQFIFDVFPSVELNKFGCLEVDRLDEFSPLKNADGAKNDTPTTCRNHYLERSSKWVIQNGGVIDNQGLVEVDSKTSYGGEGLEFVNGKHFKNGDII</sequence>
<gene>
    <name type="primary">UAP1</name>
</gene>
<evidence type="ECO:0000250" key="1"/>
<evidence type="ECO:0000250" key="2">
    <source>
        <dbReference type="UniProtKB" id="Q9M9P3"/>
    </source>
</evidence>
<evidence type="ECO:0000305" key="3"/>
<evidence type="ECO:0007829" key="4">
    <source>
        <dbReference type="PDB" id="2YQC"/>
    </source>
</evidence>
<evidence type="ECO:0007829" key="5">
    <source>
        <dbReference type="PDB" id="2YQS"/>
    </source>
</evidence>